<sequence>MKSTRPFHPTPVITIDGPTASGKGTVAALVAAHLGFHLLDSGALYRLAALASVRYGIDAQDIDALVKLIDDLHITFREGCAQLDGVDVSNDIRAEAVGNRASAIAVHGPVRVALVARQRAFRKTPGLVADGRDMGTVIFPDAVLKVFLTASAEARAARRHKQLMQKGFSANIENLLRDLRERDARDSNRAAAPLKPAADAKLLDTSALSVDQAVDQVLQWYRALGQPA</sequence>
<feature type="chain" id="PRO_1000048203" description="Cytidylate kinase">
    <location>
        <begin position="1"/>
        <end position="228"/>
    </location>
</feature>
<feature type="binding site" evidence="1">
    <location>
        <begin position="17"/>
        <end position="25"/>
    </location>
    <ligand>
        <name>ATP</name>
        <dbReference type="ChEBI" id="CHEBI:30616"/>
    </ligand>
</feature>
<protein>
    <recommendedName>
        <fullName evidence="1">Cytidylate kinase</fullName>
        <shortName evidence="1">CK</shortName>
        <ecNumber evidence="1">2.7.4.25</ecNumber>
    </recommendedName>
    <alternativeName>
        <fullName evidence="1">Cytidine monophosphate kinase</fullName>
        <shortName evidence="1">CMP kinase</shortName>
    </alternativeName>
</protein>
<accession>A4JCH5</accession>
<proteinExistence type="inferred from homology"/>
<organism>
    <name type="scientific">Burkholderia vietnamiensis (strain G4 / LMG 22486)</name>
    <name type="common">Burkholderia cepacia (strain R1808)</name>
    <dbReference type="NCBI Taxonomy" id="269482"/>
    <lineage>
        <taxon>Bacteria</taxon>
        <taxon>Pseudomonadati</taxon>
        <taxon>Pseudomonadota</taxon>
        <taxon>Betaproteobacteria</taxon>
        <taxon>Burkholderiales</taxon>
        <taxon>Burkholderiaceae</taxon>
        <taxon>Burkholderia</taxon>
        <taxon>Burkholderia cepacia complex</taxon>
    </lineage>
</organism>
<name>KCY_BURVG</name>
<comment type="catalytic activity">
    <reaction evidence="1">
        <text>CMP + ATP = CDP + ADP</text>
        <dbReference type="Rhea" id="RHEA:11600"/>
        <dbReference type="ChEBI" id="CHEBI:30616"/>
        <dbReference type="ChEBI" id="CHEBI:58069"/>
        <dbReference type="ChEBI" id="CHEBI:60377"/>
        <dbReference type="ChEBI" id="CHEBI:456216"/>
        <dbReference type="EC" id="2.7.4.25"/>
    </reaction>
</comment>
<comment type="catalytic activity">
    <reaction evidence="1">
        <text>dCMP + ATP = dCDP + ADP</text>
        <dbReference type="Rhea" id="RHEA:25094"/>
        <dbReference type="ChEBI" id="CHEBI:30616"/>
        <dbReference type="ChEBI" id="CHEBI:57566"/>
        <dbReference type="ChEBI" id="CHEBI:58593"/>
        <dbReference type="ChEBI" id="CHEBI:456216"/>
        <dbReference type="EC" id="2.7.4.25"/>
    </reaction>
</comment>
<comment type="subcellular location">
    <subcellularLocation>
        <location evidence="1">Cytoplasm</location>
    </subcellularLocation>
</comment>
<comment type="similarity">
    <text evidence="1">Belongs to the cytidylate kinase family. Type 1 subfamily.</text>
</comment>
<dbReference type="EC" id="2.7.4.25" evidence="1"/>
<dbReference type="EMBL" id="CP000614">
    <property type="protein sequence ID" value="ABO53978.1"/>
    <property type="molecule type" value="Genomic_DNA"/>
</dbReference>
<dbReference type="SMR" id="A4JCH5"/>
<dbReference type="KEGG" id="bvi:Bcep1808_0967"/>
<dbReference type="eggNOG" id="COG0283">
    <property type="taxonomic scope" value="Bacteria"/>
</dbReference>
<dbReference type="HOGENOM" id="CLU_079959_2_0_4"/>
<dbReference type="Proteomes" id="UP000002287">
    <property type="component" value="Chromosome 1"/>
</dbReference>
<dbReference type="GO" id="GO:0005829">
    <property type="term" value="C:cytosol"/>
    <property type="evidence" value="ECO:0007669"/>
    <property type="project" value="TreeGrafter"/>
</dbReference>
<dbReference type="GO" id="GO:0005524">
    <property type="term" value="F:ATP binding"/>
    <property type="evidence" value="ECO:0007669"/>
    <property type="project" value="UniProtKB-UniRule"/>
</dbReference>
<dbReference type="GO" id="GO:0036430">
    <property type="term" value="F:CMP kinase activity"/>
    <property type="evidence" value="ECO:0007669"/>
    <property type="project" value="RHEA"/>
</dbReference>
<dbReference type="GO" id="GO:0036431">
    <property type="term" value="F:dCMP kinase activity"/>
    <property type="evidence" value="ECO:0007669"/>
    <property type="project" value="RHEA"/>
</dbReference>
<dbReference type="GO" id="GO:0015949">
    <property type="term" value="P:nucleobase-containing small molecule interconversion"/>
    <property type="evidence" value="ECO:0007669"/>
    <property type="project" value="TreeGrafter"/>
</dbReference>
<dbReference type="GO" id="GO:0006220">
    <property type="term" value="P:pyrimidine nucleotide metabolic process"/>
    <property type="evidence" value="ECO:0007669"/>
    <property type="project" value="UniProtKB-UniRule"/>
</dbReference>
<dbReference type="CDD" id="cd02020">
    <property type="entry name" value="CMPK"/>
    <property type="match status" value="1"/>
</dbReference>
<dbReference type="Gene3D" id="3.40.50.300">
    <property type="entry name" value="P-loop containing nucleotide triphosphate hydrolases"/>
    <property type="match status" value="1"/>
</dbReference>
<dbReference type="HAMAP" id="MF_00238">
    <property type="entry name" value="Cytidyl_kinase_type1"/>
    <property type="match status" value="1"/>
</dbReference>
<dbReference type="InterPro" id="IPR003136">
    <property type="entry name" value="Cytidylate_kin"/>
</dbReference>
<dbReference type="InterPro" id="IPR011994">
    <property type="entry name" value="Cytidylate_kinase_dom"/>
</dbReference>
<dbReference type="InterPro" id="IPR027417">
    <property type="entry name" value="P-loop_NTPase"/>
</dbReference>
<dbReference type="NCBIfam" id="TIGR00017">
    <property type="entry name" value="cmk"/>
    <property type="match status" value="1"/>
</dbReference>
<dbReference type="PANTHER" id="PTHR21299:SF2">
    <property type="entry name" value="CYTIDYLATE KINASE"/>
    <property type="match status" value="1"/>
</dbReference>
<dbReference type="PANTHER" id="PTHR21299">
    <property type="entry name" value="CYTIDYLATE KINASE/PANTOATE-BETA-ALANINE LIGASE"/>
    <property type="match status" value="1"/>
</dbReference>
<dbReference type="Pfam" id="PF02224">
    <property type="entry name" value="Cytidylate_kin"/>
    <property type="match status" value="1"/>
</dbReference>
<dbReference type="SUPFAM" id="SSF52540">
    <property type="entry name" value="P-loop containing nucleoside triphosphate hydrolases"/>
    <property type="match status" value="1"/>
</dbReference>
<reference key="1">
    <citation type="submission" date="2007-03" db="EMBL/GenBank/DDBJ databases">
        <title>Complete sequence of chromosome 1 of Burkholderia vietnamiensis G4.</title>
        <authorList>
            <consortium name="US DOE Joint Genome Institute"/>
            <person name="Copeland A."/>
            <person name="Lucas S."/>
            <person name="Lapidus A."/>
            <person name="Barry K."/>
            <person name="Detter J.C."/>
            <person name="Glavina del Rio T."/>
            <person name="Hammon N."/>
            <person name="Israni S."/>
            <person name="Dalin E."/>
            <person name="Tice H."/>
            <person name="Pitluck S."/>
            <person name="Chain P."/>
            <person name="Malfatti S."/>
            <person name="Shin M."/>
            <person name="Vergez L."/>
            <person name="Schmutz J."/>
            <person name="Larimer F."/>
            <person name="Land M."/>
            <person name="Hauser L."/>
            <person name="Kyrpides N."/>
            <person name="Tiedje J."/>
            <person name="Richardson P."/>
        </authorList>
    </citation>
    <scope>NUCLEOTIDE SEQUENCE [LARGE SCALE GENOMIC DNA]</scope>
    <source>
        <strain>G4 / LMG 22486</strain>
    </source>
</reference>
<evidence type="ECO:0000255" key="1">
    <source>
        <dbReference type="HAMAP-Rule" id="MF_00238"/>
    </source>
</evidence>
<keyword id="KW-0067">ATP-binding</keyword>
<keyword id="KW-0963">Cytoplasm</keyword>
<keyword id="KW-0418">Kinase</keyword>
<keyword id="KW-0547">Nucleotide-binding</keyword>
<keyword id="KW-0808">Transferase</keyword>
<gene>
    <name evidence="1" type="primary">cmk</name>
    <name type="ordered locus">Bcep1808_0967</name>
</gene>